<reference key="1">
    <citation type="journal article" date="1999" name="J. Biol. Chem.">
        <title>A novel human apolipoprotein (apoM).</title>
        <authorList>
            <person name="Xu N."/>
            <person name="Dahlbaeck B."/>
        </authorList>
    </citation>
    <scope>NUCLEOTIDE SEQUENCE [MRNA] (ISOFORM 1)</scope>
    <scope>PROTEIN SEQUENCE OF 1-15</scope>
    <source>
        <tissue>Liver</tissue>
    </source>
</reference>
<reference key="2">
    <citation type="submission" date="1999-07" db="EMBL/GenBank/DDBJ databases">
        <title>Characterisation of the novel gene G3a located in the class III region of the human major histocompatibility complex.</title>
        <authorList>
            <person name="Thomson W."/>
            <person name="Campbell R.D."/>
        </authorList>
    </citation>
    <scope>NUCLEOTIDE SEQUENCE [MRNA] (ISOFORM 1)</scope>
</reference>
<reference key="3">
    <citation type="submission" date="1999-05" db="EMBL/GenBank/DDBJ databases">
        <title>Human partial CDS from CD34+ stem cells.</title>
        <authorList>
            <person name="Ye M."/>
            <person name="Zhang Q.-H."/>
            <person name="Zhou J."/>
            <person name="Shen Y."/>
            <person name="Wu X.-Y."/>
            <person name="Guan Z.Q."/>
            <person name="Wang L."/>
            <person name="Fan H.-Y."/>
            <person name="Mao Y.-F."/>
            <person name="Dai M."/>
            <person name="Huang Q.-H."/>
            <person name="Chen S.-J."/>
            <person name="Chen Z."/>
        </authorList>
    </citation>
    <scope>NUCLEOTIDE SEQUENCE [LARGE SCALE MRNA] (ISOFORM 1)</scope>
    <source>
        <tissue>Umbilical cord blood</tissue>
    </source>
</reference>
<reference key="4">
    <citation type="submission" date="1999-09" db="EMBL/GenBank/DDBJ databases">
        <title>Homo sapiens 2,229,817bp genomic DNA of 6p21.3 HLA class I region.</title>
        <authorList>
            <person name="Shiina S."/>
            <person name="Tamiya G."/>
            <person name="Oka A."/>
            <person name="Inoko H."/>
        </authorList>
    </citation>
    <scope>NUCLEOTIDE SEQUENCE [LARGE SCALE GENOMIC DNA]</scope>
</reference>
<reference key="5">
    <citation type="journal article" date="2003" name="Genome Res.">
        <title>Analysis of the gene-dense major histocompatibility complex class III region and its comparison to mouse.</title>
        <authorList>
            <person name="Xie T."/>
            <person name="Rowen L."/>
            <person name="Aguado B."/>
            <person name="Ahearn M.E."/>
            <person name="Madan A."/>
            <person name="Qin S."/>
            <person name="Campbell R.D."/>
            <person name="Hood L."/>
        </authorList>
    </citation>
    <scope>NUCLEOTIDE SEQUENCE [LARGE SCALE GENOMIC DNA]</scope>
</reference>
<reference key="6">
    <citation type="journal article" date="2004" name="Nat. Biotechnol.">
        <title>Transcriptome characterization elucidates signaling networks that control human ES cell growth and differentiation.</title>
        <authorList>
            <person name="Brandenberger R."/>
            <person name="Wei H."/>
            <person name="Zhang S."/>
            <person name="Lei S."/>
            <person name="Murage J."/>
            <person name="Fisk G.J."/>
            <person name="Li Y."/>
            <person name="Xu C."/>
            <person name="Fang R."/>
            <person name="Guegler K."/>
            <person name="Rao M.S."/>
            <person name="Mandalam R."/>
            <person name="Lebkowski J."/>
            <person name="Stanton L.W."/>
        </authorList>
    </citation>
    <scope>NUCLEOTIDE SEQUENCE [LARGE SCALE MRNA] (ISOFORM 2)</scope>
    <source>
        <tissue>Embryonic stem cell</tissue>
    </source>
</reference>
<reference key="7">
    <citation type="journal article" date="2003" name="Nature">
        <title>The DNA sequence and analysis of human chromosome 6.</title>
        <authorList>
            <person name="Mungall A.J."/>
            <person name="Palmer S.A."/>
            <person name="Sims S.K."/>
            <person name="Edwards C.A."/>
            <person name="Ashurst J.L."/>
            <person name="Wilming L."/>
            <person name="Jones M.C."/>
            <person name="Horton R."/>
            <person name="Hunt S.E."/>
            <person name="Scott C.E."/>
            <person name="Gilbert J.G.R."/>
            <person name="Clamp M.E."/>
            <person name="Bethel G."/>
            <person name="Milne S."/>
            <person name="Ainscough R."/>
            <person name="Almeida J.P."/>
            <person name="Ambrose K.D."/>
            <person name="Andrews T.D."/>
            <person name="Ashwell R.I.S."/>
            <person name="Babbage A.K."/>
            <person name="Bagguley C.L."/>
            <person name="Bailey J."/>
            <person name="Banerjee R."/>
            <person name="Barker D.J."/>
            <person name="Barlow K.F."/>
            <person name="Bates K."/>
            <person name="Beare D.M."/>
            <person name="Beasley H."/>
            <person name="Beasley O."/>
            <person name="Bird C.P."/>
            <person name="Blakey S.E."/>
            <person name="Bray-Allen S."/>
            <person name="Brook J."/>
            <person name="Brown A.J."/>
            <person name="Brown J.Y."/>
            <person name="Burford D.C."/>
            <person name="Burrill W."/>
            <person name="Burton J."/>
            <person name="Carder C."/>
            <person name="Carter N.P."/>
            <person name="Chapman J.C."/>
            <person name="Clark S.Y."/>
            <person name="Clark G."/>
            <person name="Clee C.M."/>
            <person name="Clegg S."/>
            <person name="Cobley V."/>
            <person name="Collier R.E."/>
            <person name="Collins J.E."/>
            <person name="Colman L.K."/>
            <person name="Corby N.R."/>
            <person name="Coville G.J."/>
            <person name="Culley K.M."/>
            <person name="Dhami P."/>
            <person name="Davies J."/>
            <person name="Dunn M."/>
            <person name="Earthrowl M.E."/>
            <person name="Ellington A.E."/>
            <person name="Evans K.A."/>
            <person name="Faulkner L."/>
            <person name="Francis M.D."/>
            <person name="Frankish A."/>
            <person name="Frankland J."/>
            <person name="French L."/>
            <person name="Garner P."/>
            <person name="Garnett J."/>
            <person name="Ghori M.J."/>
            <person name="Gilby L.M."/>
            <person name="Gillson C.J."/>
            <person name="Glithero R.J."/>
            <person name="Grafham D.V."/>
            <person name="Grant M."/>
            <person name="Gribble S."/>
            <person name="Griffiths C."/>
            <person name="Griffiths M.N.D."/>
            <person name="Hall R."/>
            <person name="Halls K.S."/>
            <person name="Hammond S."/>
            <person name="Harley J.L."/>
            <person name="Hart E.A."/>
            <person name="Heath P.D."/>
            <person name="Heathcott R."/>
            <person name="Holmes S.J."/>
            <person name="Howden P.J."/>
            <person name="Howe K.L."/>
            <person name="Howell G.R."/>
            <person name="Huckle E."/>
            <person name="Humphray S.J."/>
            <person name="Humphries M.D."/>
            <person name="Hunt A.R."/>
            <person name="Johnson C.M."/>
            <person name="Joy A.A."/>
            <person name="Kay M."/>
            <person name="Keenan S.J."/>
            <person name="Kimberley A.M."/>
            <person name="King A."/>
            <person name="Laird G.K."/>
            <person name="Langford C."/>
            <person name="Lawlor S."/>
            <person name="Leongamornlert D.A."/>
            <person name="Leversha M."/>
            <person name="Lloyd C.R."/>
            <person name="Lloyd D.M."/>
            <person name="Loveland J.E."/>
            <person name="Lovell J."/>
            <person name="Martin S."/>
            <person name="Mashreghi-Mohammadi M."/>
            <person name="Maslen G.L."/>
            <person name="Matthews L."/>
            <person name="McCann O.T."/>
            <person name="McLaren S.J."/>
            <person name="McLay K."/>
            <person name="McMurray A."/>
            <person name="Moore M.J.F."/>
            <person name="Mullikin J.C."/>
            <person name="Niblett D."/>
            <person name="Nickerson T."/>
            <person name="Novik K.L."/>
            <person name="Oliver K."/>
            <person name="Overton-Larty E.K."/>
            <person name="Parker A."/>
            <person name="Patel R."/>
            <person name="Pearce A.V."/>
            <person name="Peck A.I."/>
            <person name="Phillimore B.J.C.T."/>
            <person name="Phillips S."/>
            <person name="Plumb R.W."/>
            <person name="Porter K.M."/>
            <person name="Ramsey Y."/>
            <person name="Ranby S.A."/>
            <person name="Rice C.M."/>
            <person name="Ross M.T."/>
            <person name="Searle S.M."/>
            <person name="Sehra H.K."/>
            <person name="Sheridan E."/>
            <person name="Skuce C.D."/>
            <person name="Smith S."/>
            <person name="Smith M."/>
            <person name="Spraggon L."/>
            <person name="Squares S.L."/>
            <person name="Steward C.A."/>
            <person name="Sycamore N."/>
            <person name="Tamlyn-Hall G."/>
            <person name="Tester J."/>
            <person name="Theaker A.J."/>
            <person name="Thomas D.W."/>
            <person name="Thorpe A."/>
            <person name="Tracey A."/>
            <person name="Tromans A."/>
            <person name="Tubby B."/>
            <person name="Wall M."/>
            <person name="Wallis J.M."/>
            <person name="West A.P."/>
            <person name="White S.S."/>
            <person name="Whitehead S.L."/>
            <person name="Whittaker H."/>
            <person name="Wild A."/>
            <person name="Willey D.J."/>
            <person name="Wilmer T.E."/>
            <person name="Wood J.M."/>
            <person name="Wray P.W."/>
            <person name="Wyatt J.C."/>
            <person name="Young L."/>
            <person name="Younger R.M."/>
            <person name="Bentley D.R."/>
            <person name="Coulson A."/>
            <person name="Durbin R.M."/>
            <person name="Hubbard T."/>
            <person name="Sulston J.E."/>
            <person name="Dunham I."/>
            <person name="Rogers J."/>
            <person name="Beck S."/>
        </authorList>
    </citation>
    <scope>NUCLEOTIDE SEQUENCE [LARGE SCALE GENOMIC DNA]</scope>
</reference>
<reference key="8">
    <citation type="submission" date="2005-07" db="EMBL/GenBank/DDBJ databases">
        <authorList>
            <person name="Mural R.J."/>
            <person name="Istrail S."/>
            <person name="Sutton G.G."/>
            <person name="Florea L."/>
            <person name="Halpern A.L."/>
            <person name="Mobarry C.M."/>
            <person name="Lippert R."/>
            <person name="Walenz B."/>
            <person name="Shatkay H."/>
            <person name="Dew I."/>
            <person name="Miller J.R."/>
            <person name="Flanigan M.J."/>
            <person name="Edwards N.J."/>
            <person name="Bolanos R."/>
            <person name="Fasulo D."/>
            <person name="Halldorsson B.V."/>
            <person name="Hannenhalli S."/>
            <person name="Turner R."/>
            <person name="Yooseph S."/>
            <person name="Lu F."/>
            <person name="Nusskern D.R."/>
            <person name="Shue B.C."/>
            <person name="Zheng X.H."/>
            <person name="Zhong F."/>
            <person name="Delcher A.L."/>
            <person name="Huson D.H."/>
            <person name="Kravitz S.A."/>
            <person name="Mouchard L."/>
            <person name="Reinert K."/>
            <person name="Remington K.A."/>
            <person name="Clark A.G."/>
            <person name="Waterman M.S."/>
            <person name="Eichler E.E."/>
            <person name="Adams M.D."/>
            <person name="Hunkapiller M.W."/>
            <person name="Myers E.W."/>
            <person name="Venter J.C."/>
        </authorList>
    </citation>
    <scope>NUCLEOTIDE SEQUENCE [LARGE SCALE GENOMIC DNA]</scope>
</reference>
<reference key="9">
    <citation type="journal article" date="2004" name="Genome Res.">
        <title>The status, quality, and expansion of the NIH full-length cDNA project: the Mammalian Gene Collection (MGC).</title>
        <authorList>
            <consortium name="The MGC Project Team"/>
        </authorList>
    </citation>
    <scope>NUCLEOTIDE SEQUENCE [LARGE SCALE MRNA] (ISOFORM 1)</scope>
    <source>
        <tissue>Liver</tissue>
    </source>
</reference>
<reference key="10">
    <citation type="journal article" date="2005" name="J. Proteome Res.">
        <title>Human plasma N-glycoproteome analysis by immunoaffinity subtraction, hydrazide chemistry, and mass spectrometry.</title>
        <authorList>
            <person name="Liu T."/>
            <person name="Qian W.-J."/>
            <person name="Gritsenko M.A."/>
            <person name="Camp D.G. II"/>
            <person name="Monroe M.E."/>
            <person name="Moore R.J."/>
            <person name="Smith R.D."/>
        </authorList>
    </citation>
    <scope>GLYCOSYLATION [LARGE SCALE ANALYSIS] AT ASN-135</scope>
    <source>
        <tissue>Plasma</tissue>
    </source>
</reference>
<reference key="11">
    <citation type="journal article" date="2007" name="J. Lipid Res.">
        <title>Hydrophobic ligand binding properties of the human lipocalin apolipoprotein M.</title>
        <authorList>
            <person name="Ahnstrom J."/>
            <person name="Faber K."/>
            <person name="Axler O."/>
            <person name="Dahlback B."/>
        </authorList>
    </citation>
    <scope>FUNCTION</scope>
    <scope>SUBCELLULAR LOCATION</scope>
    <scope>MUTAGENESIS OF GLN-22</scope>
</reference>
<reference key="12">
    <citation type="journal article" date="2008" name="FEBS Lett.">
        <title>Apolipoprotein M associates to lipoproteins through its retained signal peptide.</title>
        <authorList>
            <person name="Axler O."/>
            <person name="Ahnstrom J."/>
            <person name="Dahlback B."/>
        </authorList>
    </citation>
    <scope>SUBCELLULAR LOCATION</scope>
    <scope>MUTAGENESIS OF GLN-22</scope>
</reference>
<reference key="13">
    <citation type="journal article" date="2008" name="J. Biol. Chem.">
        <title>The signal peptide anchors apolipoprotein M in plasma lipoproteins and prevents rapid clearance of apolipoprotein M from plasma.</title>
        <authorList>
            <person name="Christoffersen C."/>
            <person name="Ahnstrom J."/>
            <person name="Axler O."/>
            <person name="Christensen E.I."/>
            <person name="Dahlback B."/>
            <person name="Nielsen L.B."/>
        </authorList>
    </citation>
    <scope>SUBCELLULAR LOCATION</scope>
    <scope>MUTAGENESIS OF GLN-22</scope>
</reference>
<reference key="14">
    <citation type="journal article" date="2009" name="J. Proteome Res.">
        <title>Glycoproteomics analysis of human liver tissue by combination of multiple enzyme digestion and hydrazide chemistry.</title>
        <authorList>
            <person name="Chen R."/>
            <person name="Jiang X."/>
            <person name="Sun D."/>
            <person name="Han G."/>
            <person name="Wang F."/>
            <person name="Ye M."/>
            <person name="Wang L."/>
            <person name="Zou H."/>
        </authorList>
    </citation>
    <scope>GLYCOSYLATION [LARGE SCALE ANALYSIS] AT ASN-135</scope>
    <source>
        <tissue>Liver</tissue>
    </source>
</reference>
<reference key="15">
    <citation type="journal article" date="2011" name="BMC Syst. Biol.">
        <title>Initial characterization of the human central proteome.</title>
        <authorList>
            <person name="Burkard T.R."/>
            <person name="Planyavsky M."/>
            <person name="Kaupe I."/>
            <person name="Breitwieser F.P."/>
            <person name="Buerckstuemmer T."/>
            <person name="Bennett K.L."/>
            <person name="Superti-Furga G."/>
            <person name="Colinge J."/>
        </authorList>
    </citation>
    <scope>IDENTIFICATION BY MASS SPECTROMETRY [LARGE SCALE ANALYSIS]</scope>
</reference>
<reference key="16">
    <citation type="journal article" date="2001" name="FEBS Lett.">
        <title>Proposed lipocalin fold for apolipoprotein M based on bioinformatics and site-directed mutagenesis.</title>
        <authorList>
            <person name="Duan J."/>
            <person name="Dahlbaeck B."/>
            <person name="Villoutreix B.O."/>
        </authorList>
    </citation>
    <scope>3D-STRUCTURE MODELING</scope>
    <scope>MUTAGENESIS</scope>
</reference>
<reference key="17">
    <citation type="journal article" date="2009" name="J. Mol. Biol.">
        <title>Serendipitous fatty acid binding reveals the structural determinants for ligand recognition in apolipoprotein M.</title>
        <authorList>
            <person name="Sevvana M."/>
            <person name="Ahnstrom J."/>
            <person name="Egerer-Sieber C."/>
            <person name="Lange H.A."/>
            <person name="Dahlback B."/>
            <person name="Muller Y.A."/>
        </authorList>
    </citation>
    <scope>X-RAY CRYSTALLOGRAPHY (1.95 ANGSTROMS) OF 22-188 IN COMPLEX WITH FATTY ACIDS</scope>
    <scope>DISULFIDE BONDS</scope>
    <scope>FUNCTION</scope>
</reference>
<proteinExistence type="evidence at protein level"/>
<protein>
    <recommendedName>
        <fullName>Apolipoprotein M</fullName>
        <shortName>Apo-M</shortName>
        <shortName>ApoM</shortName>
    </recommendedName>
    <alternativeName>
        <fullName>Protein G3a</fullName>
    </alternativeName>
</protein>
<name>APOM_HUMAN</name>
<keyword id="KW-0002">3D-structure</keyword>
<keyword id="KW-0025">Alternative splicing</keyword>
<keyword id="KW-0903">Direct protein sequencing</keyword>
<keyword id="KW-1015">Disulfide bond</keyword>
<keyword id="KW-0325">Glycoprotein</keyword>
<keyword id="KW-0345">HDL</keyword>
<keyword id="KW-0445">Lipid transport</keyword>
<keyword id="KW-1267">Proteomics identification</keyword>
<keyword id="KW-1185">Reference proteome</keyword>
<keyword id="KW-0964">Secreted</keyword>
<keyword id="KW-0732">Signal</keyword>
<keyword id="KW-0813">Transport</keyword>
<comment type="function">
    <text evidence="4 8">Probably involved in lipid transport. Can bind sphingosine-1-phosphate, myristic acid, palmitic acid and stearic acid, retinol, all-trans-retinoic acid and 9-cis-retinoic acid.</text>
</comment>
<comment type="subunit">
    <text evidence="1">Interacts with LRP2; LRP2 mediates APOM renal uptake and subsequent lysosomal degradation.</text>
</comment>
<comment type="subcellular location">
    <subcellularLocation>
        <location evidence="4 5 6">Secreted</location>
    </subcellularLocation>
    <text>Present in high density lipoprotein (HDL) and to a lesser extent in triglyceride-rich lipoproteins (TGRLP) and low density lipoproteins (LDL).</text>
</comment>
<comment type="alternative products">
    <event type="alternative splicing"/>
    <isoform>
        <id>O95445-1</id>
        <name>1</name>
        <sequence type="displayed"/>
    </isoform>
    <isoform>
        <id>O95445-2</id>
        <name>2</name>
        <sequence type="described" ref="VSP_045586"/>
    </isoform>
</comment>
<comment type="tissue specificity">
    <text>Plasma protein. Expressed in liver and kidney.</text>
</comment>
<comment type="similarity">
    <text evidence="10">Belongs to the calycin superfamily. Lipocalin family. Highly divergent.</text>
</comment>
<sequence>MFHQIWAALLYFYGIILNSIYQCPEHSQLTTLGVDGKEFPEVHLGQWYFIAGAAPTKEELATFDPVDNIVFNMAAGSAPMQLHLRATIRMKDGLCVPRKWIYHLTEGSTDLRTEGRPDMKTELFSSSCPGGIMLNETGQGYQRFLLYNRSPHPPEKCVEEFKSLTSCLDSKAFLLTPRNQEACELSNN</sequence>
<feature type="chain" id="PRO_0000223278" description="Apolipoprotein M">
    <location>
        <begin position="1"/>
        <end position="188"/>
    </location>
</feature>
<feature type="signal peptide" description="Not cleaved">
    <location>
        <begin position="1"/>
        <end position="22" status="uncertain"/>
    </location>
</feature>
<feature type="binding site" evidence="8 11">
    <location>
        <position position="136"/>
    </location>
    <ligand>
        <name>tetradecanoate</name>
        <dbReference type="ChEBI" id="CHEBI:30807"/>
    </ligand>
</feature>
<feature type="binding site" evidence="8 11">
    <location>
        <position position="143"/>
    </location>
    <ligand>
        <name>tetradecanoate</name>
        <dbReference type="ChEBI" id="CHEBI:30807"/>
    </ligand>
</feature>
<feature type="glycosylation site" description="N-linked (GlcNAc...) asparagine" evidence="3 7">
    <location>
        <position position="135"/>
    </location>
</feature>
<feature type="disulfide bond" evidence="8">
    <location>
        <begin position="23"/>
        <end position="167"/>
    </location>
</feature>
<feature type="disulfide bond" evidence="8">
    <location>
        <begin position="95"/>
        <end position="183"/>
    </location>
</feature>
<feature type="disulfide bond" evidence="8">
    <location>
        <begin position="128"/>
        <end position="157"/>
    </location>
</feature>
<feature type="splice variant" id="VSP_045586" description="In isoform 2." evidence="9">
    <location>
        <begin position="1"/>
        <end position="72"/>
    </location>
</feature>
<feature type="mutagenesis site" description="Introduces a signal cleavage site. Abolishes interaction with lipoprotein particles. Leads to rapid elimination from plasma." evidence="4 5 6">
    <original>Q</original>
    <variation>A</variation>
    <location>
        <position position="22"/>
    </location>
</feature>
<feature type="mutagenesis site" description="Loss of glycosylation." evidence="2">
    <original>N</original>
    <variation>Q</variation>
    <location>
        <position position="135"/>
    </location>
</feature>
<feature type="mutagenesis site" description="No loss of glycosylation." evidence="2">
    <original>N</original>
    <variation>Q</variation>
    <location>
        <position position="148"/>
    </location>
</feature>
<feature type="sequence conflict" description="In Ref. 3; AAF29014." evidence="10" ref="3">
    <original>MFHQIWAALLYFYGIILNSIYQCPEHSQLTTLGVDGKE</original>
    <variation>RFPDSIWGSRSDTSGSPQVPKLYFCGARRESPQPQT</variation>
    <location>
        <begin position="1"/>
        <end position="38"/>
    </location>
</feature>
<feature type="sequence conflict" description="In Ref. 2; CAB51604." evidence="10" ref="2">
    <original>LTPRNQEACELSNN</original>
    <variation>VDS</variation>
    <location>
        <begin position="175"/>
        <end position="188"/>
    </location>
</feature>
<feature type="helix" evidence="12">
    <location>
        <begin position="36"/>
        <end position="38"/>
    </location>
</feature>
<feature type="helix" evidence="13">
    <location>
        <begin position="39"/>
        <end position="42"/>
    </location>
</feature>
<feature type="strand" evidence="13">
    <location>
        <begin position="45"/>
        <end position="56"/>
    </location>
</feature>
<feature type="helix" evidence="13">
    <location>
        <begin position="57"/>
        <end position="63"/>
    </location>
</feature>
<feature type="strand" evidence="13">
    <location>
        <begin position="66"/>
        <end position="75"/>
    </location>
</feature>
<feature type="strand" evidence="13">
    <location>
        <begin position="81"/>
        <end position="90"/>
    </location>
</feature>
<feature type="strand" evidence="13">
    <location>
        <begin position="95"/>
        <end position="104"/>
    </location>
</feature>
<feature type="strand" evidence="13">
    <location>
        <begin position="111"/>
        <end position="113"/>
    </location>
</feature>
<feature type="strand" evidence="13">
    <location>
        <begin position="116"/>
        <end position="124"/>
    </location>
</feature>
<feature type="strand" evidence="13">
    <location>
        <begin position="131"/>
        <end position="138"/>
    </location>
</feature>
<feature type="strand" evidence="13">
    <location>
        <begin position="141"/>
        <end position="152"/>
    </location>
</feature>
<feature type="helix" evidence="13">
    <location>
        <begin position="155"/>
        <end position="167"/>
    </location>
</feature>
<feature type="strand" evidence="13">
    <location>
        <begin position="172"/>
        <end position="175"/>
    </location>
</feature>
<evidence type="ECO:0000250" key="1">
    <source>
        <dbReference type="UniProtKB" id="Q9Z1R3"/>
    </source>
</evidence>
<evidence type="ECO:0000269" key="2">
    <source>
    </source>
</evidence>
<evidence type="ECO:0000269" key="3">
    <source>
    </source>
</evidence>
<evidence type="ECO:0000269" key="4">
    <source>
    </source>
</evidence>
<evidence type="ECO:0000269" key="5">
    <source>
    </source>
</evidence>
<evidence type="ECO:0000269" key="6">
    <source>
    </source>
</evidence>
<evidence type="ECO:0000269" key="7">
    <source>
    </source>
</evidence>
<evidence type="ECO:0000269" key="8">
    <source>
    </source>
</evidence>
<evidence type="ECO:0000303" key="9">
    <source>
    </source>
</evidence>
<evidence type="ECO:0000305" key="10"/>
<evidence type="ECO:0007744" key="11">
    <source>
        <dbReference type="PDB" id="2WEW"/>
    </source>
</evidence>
<evidence type="ECO:0007829" key="12">
    <source>
        <dbReference type="PDB" id="2WEW"/>
    </source>
</evidence>
<evidence type="ECO:0007829" key="13">
    <source>
        <dbReference type="PDB" id="2YG2"/>
    </source>
</evidence>
<gene>
    <name type="primary">APOM</name>
    <name type="synonym">G3A</name>
    <name type="synonym">NG20</name>
    <name type="ORF">HSPC336</name>
</gene>
<dbReference type="EMBL" id="AF118393">
    <property type="protein sequence ID" value="AAD11443.2"/>
    <property type="molecule type" value="mRNA"/>
</dbReference>
<dbReference type="EMBL" id="AJ245434">
    <property type="protein sequence ID" value="CAB51604.1"/>
    <property type="molecule type" value="mRNA"/>
</dbReference>
<dbReference type="EMBL" id="AF161454">
    <property type="protein sequence ID" value="AAF29014.1"/>
    <property type="molecule type" value="mRNA"/>
</dbReference>
<dbReference type="EMBL" id="AF129756">
    <property type="protein sequence ID" value="AAD18084.1"/>
    <property type="molecule type" value="Genomic_DNA"/>
</dbReference>
<dbReference type="EMBL" id="CN428415">
    <property type="status" value="NOT_ANNOTATED_CDS"/>
    <property type="molecule type" value="mRNA"/>
</dbReference>
<dbReference type="EMBL" id="BA000025">
    <property type="protein sequence ID" value="BAB63389.1"/>
    <property type="molecule type" value="Genomic_DNA"/>
</dbReference>
<dbReference type="EMBL" id="AL662801">
    <property type="status" value="NOT_ANNOTATED_CDS"/>
    <property type="molecule type" value="Genomic_DNA"/>
</dbReference>
<dbReference type="EMBL" id="AL670886">
    <property type="status" value="NOT_ANNOTATED_CDS"/>
    <property type="molecule type" value="Genomic_DNA"/>
</dbReference>
<dbReference type="EMBL" id="AL805934">
    <property type="status" value="NOT_ANNOTATED_CDS"/>
    <property type="molecule type" value="Genomic_DNA"/>
</dbReference>
<dbReference type="EMBL" id="BX511262">
    <property type="status" value="NOT_ANNOTATED_CDS"/>
    <property type="molecule type" value="Genomic_DNA"/>
</dbReference>
<dbReference type="EMBL" id="CR753842">
    <property type="status" value="NOT_ANNOTATED_CDS"/>
    <property type="molecule type" value="Genomic_DNA"/>
</dbReference>
<dbReference type="EMBL" id="CR354443">
    <property type="status" value="NOT_ANNOTATED_CDS"/>
    <property type="molecule type" value="Genomic_DNA"/>
</dbReference>
<dbReference type="EMBL" id="CR759761">
    <property type="status" value="NOT_ANNOTATED_CDS"/>
    <property type="molecule type" value="Genomic_DNA"/>
</dbReference>
<dbReference type="EMBL" id="CH471081">
    <property type="protein sequence ID" value="EAX03461.1"/>
    <property type="molecule type" value="Genomic_DNA"/>
</dbReference>
<dbReference type="EMBL" id="CH471081">
    <property type="protein sequence ID" value="EAX03463.1"/>
    <property type="molecule type" value="Genomic_DNA"/>
</dbReference>
<dbReference type="EMBL" id="BC020683">
    <property type="protein sequence ID" value="AAH20683.1"/>
    <property type="molecule type" value="mRNA"/>
</dbReference>
<dbReference type="CCDS" id="CCDS4710.1">
    <molecule id="O95445-1"/>
</dbReference>
<dbReference type="CCDS" id="CCDS59004.1">
    <molecule id="O95445-2"/>
</dbReference>
<dbReference type="RefSeq" id="NP_001243098.1">
    <molecule id="O95445-2"/>
    <property type="nucleotide sequence ID" value="NM_001256169.2"/>
</dbReference>
<dbReference type="RefSeq" id="NP_061974.2">
    <molecule id="O95445-1"/>
    <property type="nucleotide sequence ID" value="NM_019101.2"/>
</dbReference>
<dbReference type="PDB" id="2WEW">
    <property type="method" value="X-ray"/>
    <property type="resolution" value="1.95 A"/>
    <property type="chains" value="A=22-188"/>
</dbReference>
<dbReference type="PDB" id="2WEX">
    <property type="method" value="X-ray"/>
    <property type="resolution" value="2.00 A"/>
    <property type="chains" value="A=22-188"/>
</dbReference>
<dbReference type="PDB" id="2YG2">
    <property type="method" value="X-ray"/>
    <property type="resolution" value="1.70 A"/>
    <property type="chains" value="A/B=22-188"/>
</dbReference>
<dbReference type="PDBsum" id="2WEW"/>
<dbReference type="PDBsum" id="2WEX"/>
<dbReference type="PDBsum" id="2YG2"/>
<dbReference type="SMR" id="O95445"/>
<dbReference type="BioGRID" id="121006">
    <property type="interactions" value="55"/>
</dbReference>
<dbReference type="FunCoup" id="O95445">
    <property type="interactions" value="50"/>
</dbReference>
<dbReference type="IntAct" id="O95445">
    <property type="interactions" value="43"/>
</dbReference>
<dbReference type="STRING" id="9606.ENSP00000365081"/>
<dbReference type="DrugBank" id="DB11886">
    <property type="generic name" value="Infigratinib"/>
</dbReference>
<dbReference type="DrugBank" id="DB08231">
    <property type="generic name" value="Myristic acid"/>
</dbReference>
<dbReference type="DrugBank" id="DB00877">
    <property type="generic name" value="Sirolimus"/>
</dbReference>
<dbReference type="DrugBank" id="DB00460">
    <property type="generic name" value="Verteporfin"/>
</dbReference>
<dbReference type="GlyConnect" id="1015">
    <property type="glycosylation" value="6 N-Linked glycans (1 site)"/>
</dbReference>
<dbReference type="GlyCosmos" id="O95445">
    <property type="glycosylation" value="1 site, 11 glycans"/>
</dbReference>
<dbReference type="GlyGen" id="O95445">
    <property type="glycosylation" value="1 site, 44 N-linked glycans (1 site)"/>
</dbReference>
<dbReference type="iPTMnet" id="O95445"/>
<dbReference type="PhosphoSitePlus" id="O95445"/>
<dbReference type="BioMuta" id="APOM"/>
<dbReference type="CPTAC" id="non-CPTAC-1088"/>
<dbReference type="CPTAC" id="non-CPTAC-2630"/>
<dbReference type="jPOST" id="O95445"/>
<dbReference type="MassIVE" id="O95445"/>
<dbReference type="PaxDb" id="9606-ENSP00000365081"/>
<dbReference type="PeptideAtlas" id="O95445"/>
<dbReference type="ProteomicsDB" id="50881">
    <molecule id="O95445-1"/>
</dbReference>
<dbReference type="ProteomicsDB" id="63861"/>
<dbReference type="Antibodypedia" id="27445">
    <property type="antibodies" value="540 antibodies from 38 providers"/>
</dbReference>
<dbReference type="DNASU" id="55937"/>
<dbReference type="Ensembl" id="ENST00000375916.4">
    <molecule id="O95445-1"/>
    <property type="protein sequence ID" value="ENSP00000365081.3"/>
    <property type="gene ID" value="ENSG00000204444.11"/>
</dbReference>
<dbReference type="Ensembl" id="ENST00000375920.8">
    <molecule id="O95445-2"/>
    <property type="protein sequence ID" value="ENSP00000365085.4"/>
    <property type="gene ID" value="ENSG00000204444.11"/>
</dbReference>
<dbReference type="Ensembl" id="ENST00000383438.4">
    <molecule id="O95445-1"/>
    <property type="protein sequence ID" value="ENSP00000372930.4"/>
    <property type="gene ID" value="ENSG00000206409.8"/>
</dbReference>
<dbReference type="Ensembl" id="ENST00000400157.7">
    <molecule id="O95445-2"/>
    <property type="protein sequence ID" value="ENSP00000383021.3"/>
    <property type="gene ID" value="ENSG00000206409.8"/>
</dbReference>
<dbReference type="Ensembl" id="ENST00000416324.5">
    <molecule id="O95445-2"/>
    <property type="protein sequence ID" value="ENSP00000393581.1"/>
    <property type="gene ID" value="ENSG00000224290.7"/>
</dbReference>
<dbReference type="Ensembl" id="ENST00000422771.6">
    <molecule id="O95445-2"/>
    <property type="protein sequence ID" value="ENSP00000392021.2"/>
    <property type="gene ID" value="ENSG00000226215.6"/>
</dbReference>
<dbReference type="Ensembl" id="ENST00000425177.5">
    <molecule id="O95445-2"/>
    <property type="protein sequence ID" value="ENSP00000403062.1"/>
    <property type="gene ID" value="ENSG00000235754.7"/>
</dbReference>
<dbReference type="Ensembl" id="ENST00000426800.2">
    <molecule id="O95445-1"/>
    <property type="protein sequence ID" value="ENSP00000405730.2"/>
    <property type="gene ID" value="ENSG00000227567.7"/>
</dbReference>
<dbReference type="Ensembl" id="ENST00000430282.2">
    <molecule id="O95445-1"/>
    <property type="protein sequence ID" value="ENSP00000401684.2"/>
    <property type="gene ID" value="ENSG00000224290.7"/>
</dbReference>
<dbReference type="Ensembl" id="ENST00000432598.2">
    <molecule id="O95445-1"/>
    <property type="protein sequence ID" value="ENSP00000389591.2"/>
    <property type="gene ID" value="ENSG00000235754.7"/>
</dbReference>
<dbReference type="Ensembl" id="ENST00000436931.2">
    <molecule id="O95445-1"/>
    <property type="protein sequence ID" value="ENSP00000394610.2"/>
    <property type="gene ID" value="ENSG00000231974.6"/>
</dbReference>
<dbReference type="Ensembl" id="ENST00000439902.5">
    <molecule id="O95445-2"/>
    <property type="protein sequence ID" value="ENSP00000413446.1"/>
    <property type="gene ID" value="ENSG00000227567.7"/>
</dbReference>
<dbReference type="Ensembl" id="ENST00000441436.2">
    <molecule id="O95445-1"/>
    <property type="protein sequence ID" value="ENSP00000398944.2"/>
    <property type="gene ID" value="ENSG00000226215.6"/>
</dbReference>
<dbReference type="Ensembl" id="ENST00000443975.6">
    <molecule id="O95445-2"/>
    <property type="protein sequence ID" value="ENSP00000416335.2"/>
    <property type="gene ID" value="ENSG00000231974.6"/>
</dbReference>
<dbReference type="GeneID" id="55937"/>
<dbReference type="KEGG" id="hsa:55937"/>
<dbReference type="MANE-Select" id="ENST00000375916.4">
    <property type="protein sequence ID" value="ENSP00000365081.3"/>
    <property type="RefSeq nucleotide sequence ID" value="NM_019101.3"/>
    <property type="RefSeq protein sequence ID" value="NP_061974.2"/>
</dbReference>
<dbReference type="UCSC" id="uc003nvk.5">
    <molecule id="O95445-1"/>
    <property type="organism name" value="human"/>
</dbReference>
<dbReference type="AGR" id="HGNC:13916"/>
<dbReference type="CTD" id="55937"/>
<dbReference type="DisGeNET" id="55937"/>
<dbReference type="GeneCards" id="APOM"/>
<dbReference type="HGNC" id="HGNC:13916">
    <property type="gene designation" value="APOM"/>
</dbReference>
<dbReference type="HPA" id="ENSG00000204444">
    <property type="expression patterns" value="Tissue enriched (liver)"/>
</dbReference>
<dbReference type="MIM" id="606907">
    <property type="type" value="gene"/>
</dbReference>
<dbReference type="neXtProt" id="NX_O95445"/>
<dbReference type="OpenTargets" id="ENSG00000204444"/>
<dbReference type="PharmGKB" id="PA38370"/>
<dbReference type="VEuPathDB" id="HostDB:ENSG00000204444"/>
<dbReference type="eggNOG" id="ENOG502S2IN">
    <property type="taxonomic scope" value="Eukaryota"/>
</dbReference>
<dbReference type="GeneTree" id="ENSGT00390000001026"/>
<dbReference type="HOGENOM" id="CLU_2096113_0_0_1"/>
<dbReference type="InParanoid" id="O95445"/>
<dbReference type="OMA" id="SGKWANC"/>
<dbReference type="OrthoDB" id="9944312at2759"/>
<dbReference type="PAN-GO" id="O95445">
    <property type="GO annotations" value="9 GO annotations based on evolutionary models"/>
</dbReference>
<dbReference type="PhylomeDB" id="O95445"/>
<dbReference type="TreeFam" id="TF330771"/>
<dbReference type="PathwayCommons" id="O95445"/>
<dbReference type="Reactome" id="R-HSA-975634">
    <property type="pathway name" value="Retinoid metabolism and transport"/>
</dbReference>
<dbReference type="SignaLink" id="O95445"/>
<dbReference type="BioGRID-ORCS" id="55937">
    <property type="hits" value="18 hits in 1153 CRISPR screens"/>
</dbReference>
<dbReference type="ChiTaRS" id="APOM">
    <property type="organism name" value="human"/>
</dbReference>
<dbReference type="EvolutionaryTrace" id="O95445"/>
<dbReference type="GeneWiki" id="APOM"/>
<dbReference type="GenomeRNAi" id="55937"/>
<dbReference type="Pharos" id="O95445">
    <property type="development level" value="Tbio"/>
</dbReference>
<dbReference type="PRO" id="PR:O95445"/>
<dbReference type="Proteomes" id="UP000005640">
    <property type="component" value="Chromosome 6"/>
</dbReference>
<dbReference type="RNAct" id="O95445">
    <property type="molecule type" value="protein"/>
</dbReference>
<dbReference type="Bgee" id="ENSG00000204444">
    <property type="expression patterns" value="Expressed in right lobe of liver and 98 other cell types or tissues"/>
</dbReference>
<dbReference type="ExpressionAtlas" id="O95445">
    <property type="expression patterns" value="baseline and differential"/>
</dbReference>
<dbReference type="GO" id="GO:0034365">
    <property type="term" value="C:discoidal high-density lipoprotein particle"/>
    <property type="evidence" value="ECO:0000314"/>
    <property type="project" value="BHF-UCL"/>
</dbReference>
<dbReference type="GO" id="GO:0005576">
    <property type="term" value="C:extracellular region"/>
    <property type="evidence" value="ECO:0000304"/>
    <property type="project" value="Reactome"/>
</dbReference>
<dbReference type="GO" id="GO:0034364">
    <property type="term" value="C:high-density lipoprotein particle"/>
    <property type="evidence" value="ECO:0000314"/>
    <property type="project" value="BHF-UCL"/>
</dbReference>
<dbReference type="GO" id="GO:0034362">
    <property type="term" value="C:low-density lipoprotein particle"/>
    <property type="evidence" value="ECO:0000314"/>
    <property type="project" value="BHF-UCL"/>
</dbReference>
<dbReference type="GO" id="GO:0034366">
    <property type="term" value="C:spherical high-density lipoprotein particle"/>
    <property type="evidence" value="ECO:0000314"/>
    <property type="project" value="BHF-UCL"/>
</dbReference>
<dbReference type="GO" id="GO:0034361">
    <property type="term" value="C:very-low-density lipoprotein particle"/>
    <property type="evidence" value="ECO:0000314"/>
    <property type="project" value="BHF-UCL"/>
</dbReference>
<dbReference type="GO" id="GO:0016209">
    <property type="term" value="F:antioxidant activity"/>
    <property type="evidence" value="ECO:0000314"/>
    <property type="project" value="BHF-UCL"/>
</dbReference>
<dbReference type="GO" id="GO:0005319">
    <property type="term" value="F:lipid transporter activity"/>
    <property type="evidence" value="ECO:0000314"/>
    <property type="project" value="BHF-UCL"/>
</dbReference>
<dbReference type="GO" id="GO:0005543">
    <property type="term" value="F:phospholipid binding"/>
    <property type="evidence" value="ECO:0000314"/>
    <property type="project" value="BHF-UCL"/>
</dbReference>
<dbReference type="GO" id="GO:0033344">
    <property type="term" value="P:cholesterol efflux"/>
    <property type="evidence" value="ECO:0000314"/>
    <property type="project" value="BHF-UCL"/>
</dbReference>
<dbReference type="GO" id="GO:0042632">
    <property type="term" value="P:cholesterol homeostasis"/>
    <property type="evidence" value="ECO:0000305"/>
    <property type="project" value="BHF-UCL"/>
</dbReference>
<dbReference type="GO" id="GO:0034380">
    <property type="term" value="P:high-density lipoprotein particle assembly"/>
    <property type="evidence" value="ECO:0000250"/>
    <property type="project" value="BHF-UCL"/>
</dbReference>
<dbReference type="GO" id="GO:0034384">
    <property type="term" value="P:high-density lipoprotein particle clearance"/>
    <property type="evidence" value="ECO:0000250"/>
    <property type="project" value="BHF-UCL"/>
</dbReference>
<dbReference type="GO" id="GO:0034375">
    <property type="term" value="P:high-density lipoprotein particle remodeling"/>
    <property type="evidence" value="ECO:0000315"/>
    <property type="project" value="BHF-UCL"/>
</dbReference>
<dbReference type="GO" id="GO:0042157">
    <property type="term" value="P:lipoprotein metabolic process"/>
    <property type="evidence" value="ECO:0007669"/>
    <property type="project" value="Ensembl"/>
</dbReference>
<dbReference type="GO" id="GO:0034445">
    <property type="term" value="P:negative regulation of plasma lipoprotein oxidation"/>
    <property type="evidence" value="ECO:0000314"/>
    <property type="project" value="BHF-UCL"/>
</dbReference>
<dbReference type="GO" id="GO:0043691">
    <property type="term" value="P:reverse cholesterol transport"/>
    <property type="evidence" value="ECO:0000250"/>
    <property type="project" value="BHF-UCL"/>
</dbReference>
<dbReference type="CDD" id="cd19450">
    <property type="entry name" value="lipocalin_ApoM"/>
    <property type="match status" value="1"/>
</dbReference>
<dbReference type="FunFam" id="2.40.128.20:FF:000011">
    <property type="entry name" value="Apolipoprotein M"/>
    <property type="match status" value="1"/>
</dbReference>
<dbReference type="Gene3D" id="2.40.128.20">
    <property type="match status" value="1"/>
</dbReference>
<dbReference type="InterPro" id="IPR022734">
    <property type="entry name" value="ApoM"/>
</dbReference>
<dbReference type="InterPro" id="IPR012674">
    <property type="entry name" value="Calycin"/>
</dbReference>
<dbReference type="PANTHER" id="PTHR32028">
    <property type="entry name" value="APOLIPOPROTEIN M"/>
    <property type="match status" value="1"/>
</dbReference>
<dbReference type="PANTHER" id="PTHR32028:SF1">
    <property type="entry name" value="APOLIPOPROTEIN M"/>
    <property type="match status" value="1"/>
</dbReference>
<dbReference type="Pfam" id="PF11032">
    <property type="entry name" value="ApoM"/>
    <property type="match status" value="1"/>
</dbReference>
<dbReference type="SUPFAM" id="SSF50814">
    <property type="entry name" value="Lipocalins"/>
    <property type="match status" value="1"/>
</dbReference>
<organism>
    <name type="scientific">Homo sapiens</name>
    <name type="common">Human</name>
    <dbReference type="NCBI Taxonomy" id="9606"/>
    <lineage>
        <taxon>Eukaryota</taxon>
        <taxon>Metazoa</taxon>
        <taxon>Chordata</taxon>
        <taxon>Craniata</taxon>
        <taxon>Vertebrata</taxon>
        <taxon>Euteleostomi</taxon>
        <taxon>Mammalia</taxon>
        <taxon>Eutheria</taxon>
        <taxon>Euarchontoglires</taxon>
        <taxon>Primates</taxon>
        <taxon>Haplorrhini</taxon>
        <taxon>Catarrhini</taxon>
        <taxon>Hominidae</taxon>
        <taxon>Homo</taxon>
    </lineage>
</organism>
<accession>O95445</accession>
<accession>B0UX98</accession>
<accession>Q5SRP4</accession>
<accession>Q9P046</accession>
<accession>Q9UMP6</accession>